<reference key="1">
    <citation type="book" date="2006" name="Gram positive pathogens, 2nd edition">
        <title>The Staphylococcus aureus NCTC 8325 genome.</title>
        <editorList>
            <person name="Fischetti V."/>
            <person name="Novick R."/>
            <person name="Ferretti J."/>
            <person name="Portnoy D."/>
            <person name="Rood J."/>
        </editorList>
        <authorList>
            <person name="Gillaspy A.F."/>
            <person name="Worrell V."/>
            <person name="Orvis J."/>
            <person name="Roe B.A."/>
            <person name="Dyer D.W."/>
            <person name="Iandolo J.J."/>
        </authorList>
    </citation>
    <scope>NUCLEOTIDE SEQUENCE [LARGE SCALE GENOMIC DNA]</scope>
    <source>
        <strain>NCTC 8325 / PS 47</strain>
    </source>
</reference>
<proteinExistence type="inferred from homology"/>
<comment type="function">
    <text evidence="1">An aminoacyl-tRNA editing enzyme that deacylates mischarged D-aminoacyl-tRNAs. Also deacylates mischarged glycyl-tRNA(Ala), protecting cells against glycine mischarging by AlaRS. Acts via tRNA-based rather than protein-based catalysis; rejects L-amino acids rather than detecting D-amino acids in the active site. By recycling D-aminoacyl-tRNA to D-amino acids and free tRNA molecules, this enzyme counteracts the toxicity associated with the formation of D-aminoacyl-tRNA entities in vivo and helps enforce protein L-homochirality.</text>
</comment>
<comment type="catalytic activity">
    <reaction evidence="1">
        <text>glycyl-tRNA(Ala) + H2O = tRNA(Ala) + glycine + H(+)</text>
        <dbReference type="Rhea" id="RHEA:53744"/>
        <dbReference type="Rhea" id="RHEA-COMP:9657"/>
        <dbReference type="Rhea" id="RHEA-COMP:13640"/>
        <dbReference type="ChEBI" id="CHEBI:15377"/>
        <dbReference type="ChEBI" id="CHEBI:15378"/>
        <dbReference type="ChEBI" id="CHEBI:57305"/>
        <dbReference type="ChEBI" id="CHEBI:78442"/>
        <dbReference type="ChEBI" id="CHEBI:78522"/>
        <dbReference type="EC" id="3.1.1.96"/>
    </reaction>
</comment>
<comment type="catalytic activity">
    <reaction evidence="1">
        <text>a D-aminoacyl-tRNA + H2O = a tRNA + a D-alpha-amino acid + H(+)</text>
        <dbReference type="Rhea" id="RHEA:13953"/>
        <dbReference type="Rhea" id="RHEA-COMP:10123"/>
        <dbReference type="Rhea" id="RHEA-COMP:10124"/>
        <dbReference type="ChEBI" id="CHEBI:15377"/>
        <dbReference type="ChEBI" id="CHEBI:15378"/>
        <dbReference type="ChEBI" id="CHEBI:59871"/>
        <dbReference type="ChEBI" id="CHEBI:78442"/>
        <dbReference type="ChEBI" id="CHEBI:79333"/>
        <dbReference type="EC" id="3.1.1.96"/>
    </reaction>
</comment>
<comment type="subunit">
    <text evidence="1">Homodimer.</text>
</comment>
<comment type="subcellular location">
    <subcellularLocation>
        <location evidence="1">Cytoplasm</location>
    </subcellularLocation>
</comment>
<comment type="domain">
    <text evidence="1">A Gly-cisPro motif from one monomer fits into the active site of the other monomer to allow specific chiral rejection of L-amino acids.</text>
</comment>
<comment type="similarity">
    <text evidence="1">Belongs to the DTD family.</text>
</comment>
<feature type="chain" id="PRO_0000259317" description="D-aminoacyl-tRNA deacylase">
    <location>
        <begin position="1"/>
        <end position="150"/>
    </location>
</feature>
<feature type="short sequence motif" description="Gly-cisPro motif, important for rejection of L-amino acids" evidence="1">
    <location>
        <begin position="136"/>
        <end position="137"/>
    </location>
</feature>
<protein>
    <recommendedName>
        <fullName evidence="1">D-aminoacyl-tRNA deacylase</fullName>
        <shortName evidence="1">DTD</shortName>
        <ecNumber evidence="1">3.1.1.96</ecNumber>
    </recommendedName>
    <alternativeName>
        <fullName evidence="1">Gly-tRNA(Ala) deacylase</fullName>
    </alternativeName>
</protein>
<accession>Q2FXU2</accession>
<keyword id="KW-0963">Cytoplasm</keyword>
<keyword id="KW-0378">Hydrolase</keyword>
<keyword id="KW-1185">Reference proteome</keyword>
<keyword id="KW-0694">RNA-binding</keyword>
<keyword id="KW-0820">tRNA-binding</keyword>
<dbReference type="EC" id="3.1.1.96" evidence="1"/>
<dbReference type="EMBL" id="CP000253">
    <property type="protein sequence ID" value="ABD30812.1"/>
    <property type="molecule type" value="Genomic_DNA"/>
</dbReference>
<dbReference type="RefSeq" id="WP_000869983.1">
    <property type="nucleotide sequence ID" value="NZ_LS483365.1"/>
</dbReference>
<dbReference type="RefSeq" id="YP_500248.1">
    <property type="nucleotide sequence ID" value="NC_007795.1"/>
</dbReference>
<dbReference type="SMR" id="Q2FXU2"/>
<dbReference type="STRING" id="93061.SAOUHSC_01741"/>
<dbReference type="PaxDb" id="1280-SAXN108_1660"/>
<dbReference type="GeneID" id="3921089"/>
<dbReference type="KEGG" id="sao:SAOUHSC_01741"/>
<dbReference type="PATRIC" id="fig|93061.5.peg.1586"/>
<dbReference type="eggNOG" id="COG1490">
    <property type="taxonomic scope" value="Bacteria"/>
</dbReference>
<dbReference type="HOGENOM" id="CLU_076901_1_0_9"/>
<dbReference type="OrthoDB" id="9801395at2"/>
<dbReference type="PRO" id="PR:Q2FXU2"/>
<dbReference type="Proteomes" id="UP000008816">
    <property type="component" value="Chromosome"/>
</dbReference>
<dbReference type="GO" id="GO:0005737">
    <property type="term" value="C:cytoplasm"/>
    <property type="evidence" value="ECO:0000318"/>
    <property type="project" value="GO_Central"/>
</dbReference>
<dbReference type="GO" id="GO:0051500">
    <property type="term" value="F:D-tyrosyl-tRNA(Tyr) deacylase activity"/>
    <property type="evidence" value="ECO:0000318"/>
    <property type="project" value="GO_Central"/>
</dbReference>
<dbReference type="GO" id="GO:0106026">
    <property type="term" value="F:Gly-tRNA(Ala) deacylase activity"/>
    <property type="evidence" value="ECO:0007669"/>
    <property type="project" value="UniProtKB-UniRule"/>
</dbReference>
<dbReference type="GO" id="GO:0043908">
    <property type="term" value="F:Ser(Gly)-tRNA(Ala) hydrolase activity"/>
    <property type="evidence" value="ECO:0007669"/>
    <property type="project" value="UniProtKB-UniRule"/>
</dbReference>
<dbReference type="GO" id="GO:0000049">
    <property type="term" value="F:tRNA binding"/>
    <property type="evidence" value="ECO:0007669"/>
    <property type="project" value="UniProtKB-UniRule"/>
</dbReference>
<dbReference type="GO" id="GO:0019478">
    <property type="term" value="P:D-amino acid catabolic process"/>
    <property type="evidence" value="ECO:0007669"/>
    <property type="project" value="UniProtKB-UniRule"/>
</dbReference>
<dbReference type="GO" id="GO:0006399">
    <property type="term" value="P:tRNA metabolic process"/>
    <property type="evidence" value="ECO:0000318"/>
    <property type="project" value="GO_Central"/>
</dbReference>
<dbReference type="FunFam" id="3.50.80.10:FF:000005">
    <property type="entry name" value="D-aminoacyl-tRNA deacylase"/>
    <property type="match status" value="1"/>
</dbReference>
<dbReference type="Gene3D" id="3.50.80.10">
    <property type="entry name" value="D-tyrosyl-tRNA(Tyr) deacylase"/>
    <property type="match status" value="1"/>
</dbReference>
<dbReference type="HAMAP" id="MF_00518">
    <property type="entry name" value="Deacylase_Dtd"/>
    <property type="match status" value="1"/>
</dbReference>
<dbReference type="InterPro" id="IPR003732">
    <property type="entry name" value="Daa-tRNA_deacyls_DTD"/>
</dbReference>
<dbReference type="InterPro" id="IPR023509">
    <property type="entry name" value="DTD-like_sf"/>
</dbReference>
<dbReference type="NCBIfam" id="TIGR00256">
    <property type="entry name" value="D-aminoacyl-tRNA deacylase"/>
    <property type="match status" value="1"/>
</dbReference>
<dbReference type="PANTHER" id="PTHR10472:SF5">
    <property type="entry name" value="D-AMINOACYL-TRNA DEACYLASE 1"/>
    <property type="match status" value="1"/>
</dbReference>
<dbReference type="PANTHER" id="PTHR10472">
    <property type="entry name" value="D-TYROSYL-TRNA TYR DEACYLASE"/>
    <property type="match status" value="1"/>
</dbReference>
<dbReference type="Pfam" id="PF02580">
    <property type="entry name" value="Tyr_Deacylase"/>
    <property type="match status" value="1"/>
</dbReference>
<dbReference type="SUPFAM" id="SSF69500">
    <property type="entry name" value="DTD-like"/>
    <property type="match status" value="1"/>
</dbReference>
<organism>
    <name type="scientific">Staphylococcus aureus (strain NCTC 8325 / PS 47)</name>
    <dbReference type="NCBI Taxonomy" id="93061"/>
    <lineage>
        <taxon>Bacteria</taxon>
        <taxon>Bacillati</taxon>
        <taxon>Bacillota</taxon>
        <taxon>Bacilli</taxon>
        <taxon>Bacillales</taxon>
        <taxon>Staphylococcaceae</taxon>
        <taxon>Staphylococcus</taxon>
    </lineage>
</organism>
<evidence type="ECO:0000255" key="1">
    <source>
        <dbReference type="HAMAP-Rule" id="MF_00518"/>
    </source>
</evidence>
<gene>
    <name evidence="1" type="primary">dtd</name>
    <name type="ordered locus">SAOUHSC_01741</name>
</gene>
<sequence>MKVVVQRVKEASVTNDTLNNQIKKGYCLLVGIGQNSTEQDADVIAKKIANARLFEDDNNKLNFNIQQMNGEILSVSQFTLYADVKKGNRPGFSNSKNPDQAVKIYEYFNDALRAYGLTVKTGEFGTHMNVSINNDGPVTIIYESQDGKIQ</sequence>
<name>DTD_STAA8</name>